<gene>
    <name evidence="1" type="primary">tatA</name>
    <name type="ordered locus">PBPRA0119</name>
</gene>
<dbReference type="EMBL" id="CR378663">
    <property type="protein sequence ID" value="CAG18558.1"/>
    <property type="molecule type" value="Genomic_DNA"/>
</dbReference>
<dbReference type="RefSeq" id="WP_011216936.1">
    <property type="nucleotide sequence ID" value="NC_006370.1"/>
</dbReference>
<dbReference type="SMR" id="Q6LVW7"/>
<dbReference type="STRING" id="298386.PBPRA0119"/>
<dbReference type="KEGG" id="ppr:PBPRA0119"/>
<dbReference type="eggNOG" id="COG1826">
    <property type="taxonomic scope" value="Bacteria"/>
</dbReference>
<dbReference type="HOGENOM" id="CLU_086034_5_1_6"/>
<dbReference type="Proteomes" id="UP000000593">
    <property type="component" value="Chromosome 1"/>
</dbReference>
<dbReference type="GO" id="GO:0033281">
    <property type="term" value="C:TAT protein transport complex"/>
    <property type="evidence" value="ECO:0007669"/>
    <property type="project" value="UniProtKB-UniRule"/>
</dbReference>
<dbReference type="GO" id="GO:0008320">
    <property type="term" value="F:protein transmembrane transporter activity"/>
    <property type="evidence" value="ECO:0007669"/>
    <property type="project" value="UniProtKB-UniRule"/>
</dbReference>
<dbReference type="GO" id="GO:0043953">
    <property type="term" value="P:protein transport by the Tat complex"/>
    <property type="evidence" value="ECO:0007669"/>
    <property type="project" value="UniProtKB-UniRule"/>
</dbReference>
<dbReference type="Gene3D" id="1.20.5.3310">
    <property type="match status" value="1"/>
</dbReference>
<dbReference type="HAMAP" id="MF_00236">
    <property type="entry name" value="TatA_E"/>
    <property type="match status" value="1"/>
</dbReference>
<dbReference type="InterPro" id="IPR003369">
    <property type="entry name" value="TatA/B/E"/>
</dbReference>
<dbReference type="InterPro" id="IPR006312">
    <property type="entry name" value="TatA/E"/>
</dbReference>
<dbReference type="NCBIfam" id="TIGR01411">
    <property type="entry name" value="tatAE"/>
    <property type="match status" value="1"/>
</dbReference>
<dbReference type="PANTHER" id="PTHR42982">
    <property type="entry name" value="SEC-INDEPENDENT PROTEIN TRANSLOCASE PROTEIN TATA"/>
    <property type="match status" value="1"/>
</dbReference>
<dbReference type="PANTHER" id="PTHR42982:SF1">
    <property type="entry name" value="SEC-INDEPENDENT PROTEIN TRANSLOCASE PROTEIN TATA"/>
    <property type="match status" value="1"/>
</dbReference>
<dbReference type="Pfam" id="PF02416">
    <property type="entry name" value="TatA_B_E"/>
    <property type="match status" value="1"/>
</dbReference>
<proteinExistence type="inferred from homology"/>
<organism>
    <name type="scientific">Photobacterium profundum (strain SS9)</name>
    <dbReference type="NCBI Taxonomy" id="298386"/>
    <lineage>
        <taxon>Bacteria</taxon>
        <taxon>Pseudomonadati</taxon>
        <taxon>Pseudomonadota</taxon>
        <taxon>Gammaproteobacteria</taxon>
        <taxon>Vibrionales</taxon>
        <taxon>Vibrionaceae</taxon>
        <taxon>Photobacterium</taxon>
    </lineage>
</organism>
<comment type="function">
    <text evidence="1">Part of the twin-arginine translocation (Tat) system that transports large folded proteins containing a characteristic twin-arginine motif in their signal peptide across membranes. TatA could form the protein-conducting channel of the Tat system.</text>
</comment>
<comment type="subunit">
    <text evidence="1">The Tat system comprises two distinct complexes: a TatABC complex, containing multiple copies of TatA, TatB and TatC subunits, and a separate TatA complex, containing only TatA subunits. Substrates initially bind to the TatABC complex, which probably triggers association of the separate TatA complex to form the active translocon.</text>
</comment>
<comment type="subcellular location">
    <subcellularLocation>
        <location evidence="1">Cell inner membrane</location>
        <topology evidence="1">Single-pass membrane protein</topology>
    </subcellularLocation>
</comment>
<comment type="similarity">
    <text evidence="1">Belongs to the TatA/E family.</text>
</comment>
<keyword id="KW-0997">Cell inner membrane</keyword>
<keyword id="KW-1003">Cell membrane</keyword>
<keyword id="KW-0472">Membrane</keyword>
<keyword id="KW-0653">Protein transport</keyword>
<keyword id="KW-1185">Reference proteome</keyword>
<keyword id="KW-0811">Translocation</keyword>
<keyword id="KW-0812">Transmembrane</keyword>
<keyword id="KW-1133">Transmembrane helix</keyword>
<keyword id="KW-0813">Transport</keyword>
<feature type="chain" id="PRO_1000044417" description="Sec-independent protein translocase protein TatA">
    <location>
        <begin position="1"/>
        <end position="87"/>
    </location>
</feature>
<feature type="transmembrane region" description="Helical" evidence="1">
    <location>
        <begin position="1"/>
        <end position="21"/>
    </location>
</feature>
<feature type="region of interest" description="Disordered" evidence="2">
    <location>
        <begin position="54"/>
        <end position="87"/>
    </location>
</feature>
<sequence length="87" mass="9576">MGGISIWQLLIIALIIVLLFGTKKLRSLGGDLGSAVKGFKKAIGDEELTVKKDNTEADADFEQKTLSKEEQQSEDPVQKSQKDKEQV</sequence>
<accession>Q6LVW7</accession>
<protein>
    <recommendedName>
        <fullName evidence="1">Sec-independent protein translocase protein TatA</fullName>
    </recommendedName>
</protein>
<reference key="1">
    <citation type="journal article" date="2005" name="Science">
        <title>Life at depth: Photobacterium profundum genome sequence and expression analysis.</title>
        <authorList>
            <person name="Vezzi A."/>
            <person name="Campanaro S."/>
            <person name="D'Angelo M."/>
            <person name="Simonato F."/>
            <person name="Vitulo N."/>
            <person name="Lauro F.M."/>
            <person name="Cestaro A."/>
            <person name="Malacrida G."/>
            <person name="Simionati B."/>
            <person name="Cannata N."/>
            <person name="Romualdi C."/>
            <person name="Bartlett D.H."/>
            <person name="Valle G."/>
        </authorList>
    </citation>
    <scope>NUCLEOTIDE SEQUENCE [LARGE SCALE GENOMIC DNA]</scope>
    <source>
        <strain>ATCC BAA-1253 / SS9</strain>
    </source>
</reference>
<name>TATA_PHOPR</name>
<evidence type="ECO:0000255" key="1">
    <source>
        <dbReference type="HAMAP-Rule" id="MF_00236"/>
    </source>
</evidence>
<evidence type="ECO:0000256" key="2">
    <source>
        <dbReference type="SAM" id="MobiDB-lite"/>
    </source>
</evidence>